<evidence type="ECO:0000250" key="1"/>
<evidence type="ECO:0000250" key="2">
    <source>
        <dbReference type="UniProtKB" id="P60510"/>
    </source>
</evidence>
<evidence type="ECO:0000305" key="3"/>
<keyword id="KW-0007">Acetylation</keyword>
<keyword id="KW-0963">Cytoplasm</keyword>
<keyword id="KW-0206">Cytoskeleton</keyword>
<keyword id="KW-0378">Hydrolase</keyword>
<keyword id="KW-0464">Manganese</keyword>
<keyword id="KW-0479">Metal-binding</keyword>
<keyword id="KW-0488">Methylation</keyword>
<keyword id="KW-0539">Nucleus</keyword>
<keyword id="KW-0904">Protein phosphatase</keyword>
<keyword id="KW-1185">Reference proteome</keyword>
<gene>
    <name type="primary">Ppp4c</name>
</gene>
<dbReference type="EC" id="3.1.3.16"/>
<dbReference type="EMBL" id="BC091574">
    <property type="protein sequence ID" value="AAH91574.1"/>
    <property type="molecule type" value="mRNA"/>
</dbReference>
<dbReference type="RefSeq" id="NP_599186.1">
    <property type="nucleotide sequence ID" value="NM_134359.1"/>
</dbReference>
<dbReference type="SMR" id="Q5BJ92"/>
<dbReference type="FunCoup" id="Q5BJ92">
    <property type="interactions" value="2723"/>
</dbReference>
<dbReference type="STRING" id="10116.ENSRNOP00000026909"/>
<dbReference type="PhosphoSitePlus" id="Q5BJ92"/>
<dbReference type="jPOST" id="Q5BJ92"/>
<dbReference type="PaxDb" id="10116-ENSRNOP00000026909"/>
<dbReference type="GeneID" id="171366"/>
<dbReference type="KEGG" id="rno:171366"/>
<dbReference type="UCSC" id="RGD:621225">
    <property type="organism name" value="rat"/>
</dbReference>
<dbReference type="AGR" id="RGD:621225"/>
<dbReference type="CTD" id="5531"/>
<dbReference type="RGD" id="621225">
    <property type="gene designation" value="Ppp4c"/>
</dbReference>
<dbReference type="eggNOG" id="KOG0372">
    <property type="taxonomic scope" value="Eukaryota"/>
</dbReference>
<dbReference type="InParanoid" id="Q5BJ92"/>
<dbReference type="OrthoDB" id="1930084at2759"/>
<dbReference type="PhylomeDB" id="Q5BJ92"/>
<dbReference type="Reactome" id="R-RNO-5693607">
    <property type="pathway name" value="Processing of DNA double-strand break ends"/>
</dbReference>
<dbReference type="PRO" id="PR:Q5BJ92"/>
<dbReference type="Proteomes" id="UP000002494">
    <property type="component" value="Unplaced"/>
</dbReference>
<dbReference type="GO" id="GO:0005813">
    <property type="term" value="C:centrosome"/>
    <property type="evidence" value="ECO:0007669"/>
    <property type="project" value="UniProtKB-SubCell"/>
</dbReference>
<dbReference type="GO" id="GO:0000785">
    <property type="term" value="C:chromatin"/>
    <property type="evidence" value="ECO:0000266"/>
    <property type="project" value="RGD"/>
</dbReference>
<dbReference type="GO" id="GO:0005737">
    <property type="term" value="C:cytoplasm"/>
    <property type="evidence" value="ECO:0000266"/>
    <property type="project" value="RGD"/>
</dbReference>
<dbReference type="GO" id="GO:0005634">
    <property type="term" value="C:nucleus"/>
    <property type="evidence" value="ECO:0000314"/>
    <property type="project" value="RGD"/>
</dbReference>
<dbReference type="GO" id="GO:0030289">
    <property type="term" value="C:protein phosphatase 4 complex"/>
    <property type="evidence" value="ECO:0000266"/>
    <property type="project" value="RGD"/>
</dbReference>
<dbReference type="GO" id="GO:0005521">
    <property type="term" value="F:lamin binding"/>
    <property type="evidence" value="ECO:0000314"/>
    <property type="project" value="RGD"/>
</dbReference>
<dbReference type="GO" id="GO:0046872">
    <property type="term" value="F:metal ion binding"/>
    <property type="evidence" value="ECO:0007669"/>
    <property type="project" value="UniProtKB-KW"/>
</dbReference>
<dbReference type="GO" id="GO:0016791">
    <property type="term" value="F:phosphatase activity"/>
    <property type="evidence" value="ECO:0000314"/>
    <property type="project" value="RGD"/>
</dbReference>
<dbReference type="GO" id="GO:0004722">
    <property type="term" value="F:protein serine/threonine phosphatase activity"/>
    <property type="evidence" value="ECO:0000250"/>
    <property type="project" value="UniProtKB"/>
</dbReference>
<dbReference type="GO" id="GO:0044877">
    <property type="term" value="F:protein-containing complex binding"/>
    <property type="evidence" value="ECO:0000314"/>
    <property type="project" value="RGD"/>
</dbReference>
<dbReference type="GO" id="GO:0071347">
    <property type="term" value="P:cellular response to interleukin-1"/>
    <property type="evidence" value="ECO:0000270"/>
    <property type="project" value="RGD"/>
</dbReference>
<dbReference type="GO" id="GO:0000724">
    <property type="term" value="P:double-strand break repair via homologous recombination"/>
    <property type="evidence" value="ECO:0000318"/>
    <property type="project" value="GO_Central"/>
</dbReference>
<dbReference type="GO" id="GO:2000779">
    <property type="term" value="P:regulation of double-strand break repair"/>
    <property type="evidence" value="ECO:0000266"/>
    <property type="project" value="RGD"/>
</dbReference>
<dbReference type="GO" id="GO:0010569">
    <property type="term" value="P:regulation of double-strand break repair via homologous recombination"/>
    <property type="evidence" value="ECO:0000250"/>
    <property type="project" value="UniProtKB"/>
</dbReference>
<dbReference type="CDD" id="cd07415">
    <property type="entry name" value="MPP_PP2A_PP4_PP6"/>
    <property type="match status" value="1"/>
</dbReference>
<dbReference type="FunFam" id="3.60.21.10:FF:000010">
    <property type="entry name" value="Serine/threonine-protein phosphatase"/>
    <property type="match status" value="1"/>
</dbReference>
<dbReference type="Gene3D" id="3.60.21.10">
    <property type="match status" value="1"/>
</dbReference>
<dbReference type="InterPro" id="IPR004843">
    <property type="entry name" value="Calcineurin-like_PHP_ApaH"/>
</dbReference>
<dbReference type="InterPro" id="IPR029052">
    <property type="entry name" value="Metallo-depent_PP-like"/>
</dbReference>
<dbReference type="InterPro" id="IPR047129">
    <property type="entry name" value="PPA2-like"/>
</dbReference>
<dbReference type="InterPro" id="IPR006186">
    <property type="entry name" value="Ser/Thr-sp_prot-phosphatase"/>
</dbReference>
<dbReference type="PANTHER" id="PTHR45619">
    <property type="entry name" value="SERINE/THREONINE-PROTEIN PHOSPHATASE PP2A-RELATED"/>
    <property type="match status" value="1"/>
</dbReference>
<dbReference type="Pfam" id="PF00149">
    <property type="entry name" value="Metallophos"/>
    <property type="match status" value="1"/>
</dbReference>
<dbReference type="PRINTS" id="PR00114">
    <property type="entry name" value="STPHPHTASE"/>
</dbReference>
<dbReference type="SMART" id="SM00156">
    <property type="entry name" value="PP2Ac"/>
    <property type="match status" value="1"/>
</dbReference>
<dbReference type="SUPFAM" id="SSF56300">
    <property type="entry name" value="Metallo-dependent phosphatases"/>
    <property type="match status" value="1"/>
</dbReference>
<dbReference type="PROSITE" id="PS00125">
    <property type="entry name" value="SER_THR_PHOSPHATASE"/>
    <property type="match status" value="1"/>
</dbReference>
<comment type="function">
    <text evidence="1">Protein phosphatase that is involved in many processes such as microtubule organization at centrosomes, maturation of spliceosomal snRNPs, apoptosis, DNA repair, tumor necrosis factor (TNF)-alpha signaling, activation of c-Jun N-terminal kinase MAPK8, regulation of histone acetylation, DNA damage checkpoint signaling, NF-kappa-B activation and cell migration. The PPP4C-PPP4R1 PP4 complex may play a role in dephosphorylation and regulation of HDAC3. The PPP4C-PPP4R2-PPP4R3A PP4 complex specifically dephosphorylates H2AX phosphorylated on Ser-140 (gamma-H2AX) generated during DNA replication and required for DNA DSB repair. Dephosphorylates NDEL1 at CDK1 phosphorylation sites and negatively regulates CDK1 activity in interphase (By similarity). In response to DNA damage, catalyzes RPA2 dephosphorylation, an essential step for DNA repair since it allows the efficient RPA2-mediated recruitment of RAD51 to chromatin (By similarity).</text>
</comment>
<comment type="catalytic activity">
    <reaction>
        <text>O-phospho-L-seryl-[protein] + H2O = L-seryl-[protein] + phosphate</text>
        <dbReference type="Rhea" id="RHEA:20629"/>
        <dbReference type="Rhea" id="RHEA-COMP:9863"/>
        <dbReference type="Rhea" id="RHEA-COMP:11604"/>
        <dbReference type="ChEBI" id="CHEBI:15377"/>
        <dbReference type="ChEBI" id="CHEBI:29999"/>
        <dbReference type="ChEBI" id="CHEBI:43474"/>
        <dbReference type="ChEBI" id="CHEBI:83421"/>
        <dbReference type="EC" id="3.1.3.16"/>
    </reaction>
</comment>
<comment type="catalytic activity">
    <reaction>
        <text>O-phospho-L-threonyl-[protein] + H2O = L-threonyl-[protein] + phosphate</text>
        <dbReference type="Rhea" id="RHEA:47004"/>
        <dbReference type="Rhea" id="RHEA-COMP:11060"/>
        <dbReference type="Rhea" id="RHEA-COMP:11605"/>
        <dbReference type="ChEBI" id="CHEBI:15377"/>
        <dbReference type="ChEBI" id="CHEBI:30013"/>
        <dbReference type="ChEBI" id="CHEBI:43474"/>
        <dbReference type="ChEBI" id="CHEBI:61977"/>
        <dbReference type="EC" id="3.1.3.16"/>
    </reaction>
</comment>
<comment type="cofactor">
    <cofactor evidence="1">
        <name>Mn(2+)</name>
        <dbReference type="ChEBI" id="CHEBI:29035"/>
    </cofactor>
    <text evidence="1">Binds 2 manganese ions per subunit.</text>
</comment>
<comment type="subunit">
    <text evidence="1">Serine/threonine-protein phosphatase 4 (PP4) occurs in different assemblies of the catalytic and one or more regulatory subunits. Component of the PP4 complexes PPP4C-PPP4R1, PPP4C-PPP4R2, PPP4C-PPP4R2-PPP4R3A, PPP4C-PPP4R2-PPP4R3B and PPP4C-PPP4R4. The PPP4C-PPP4R2 complex appears to be a tetramer composed of 2 molecules of PPP4C and 2 molecules of PPP4R2. Interacts with REL, NFKB1/p50 and RELA. Interacts with SMN1 and GEMIN4. Interacts with IRS4 (phosphorylated). Interacts with SMEK1/PPP4R3A; the interaction requires PP4R2. Interacts with HDAC3 (By similarity).</text>
</comment>
<comment type="subcellular location">
    <subcellularLocation>
        <location evidence="1">Cytoplasm</location>
    </subcellularLocation>
    <subcellularLocation>
        <location evidence="1">Nucleus</location>
    </subcellularLocation>
    <subcellularLocation>
        <location evidence="1">Cytoplasm</location>
        <location evidence="1">Cytoskeleton</location>
        <location evidence="1">Microtubule organizing center</location>
        <location evidence="1">Centrosome</location>
    </subcellularLocation>
</comment>
<comment type="PTM">
    <text evidence="2">Methylation at the C-terminal Leu-307 is critical for interactions with regulatory subunits and functions in DNA repair.</text>
</comment>
<comment type="similarity">
    <text evidence="3">Belongs to the PPP phosphatase family. PP-4 (PP-X) subfamily.</text>
</comment>
<proteinExistence type="evidence at transcript level"/>
<sequence length="307" mass="35068">MAEISDLDRQIEQLRRCELIKESEVKALCAKAREILVEESNVQRVDSPVTVCGDIHGQFYDLKELFRVGGDVPETNYLFMGDFVDRGFYSVETFLLLLALKVRYPDRITLIRGNHESRQITQVYGFYDECLRKYGSVTVWRYCTEIFDYLSLSAIIDGKIFCVHGGLSPSIQTLDQIRTIDRKQEVPHDGPMCDLLWSDPEDTTGWGVSPRGAGYLFGSDVVAQFNAANDIDMTCRAHQLVMEGYKWHFNETVLTVWSAPNYCYRCGNVAAILELDEHLQKDFIIFEAAPQETRGIPSKKPVADYFL</sequence>
<name>PP4C_RAT</name>
<protein>
    <recommendedName>
        <fullName>Serine/threonine-protein phosphatase 4 catalytic subunit</fullName>
        <shortName>PP4C</shortName>
        <shortName>Pp4</shortName>
        <ecNumber>3.1.3.16</ecNumber>
    </recommendedName>
</protein>
<accession>Q5BJ92</accession>
<feature type="initiator methionine" description="Removed" evidence="2">
    <location>
        <position position="1"/>
    </location>
</feature>
<feature type="chain" id="PRO_0000291879" description="Serine/threonine-protein phosphatase 4 catalytic subunit">
    <location>
        <begin position="2"/>
        <end position="307"/>
    </location>
</feature>
<feature type="active site" description="Proton donor" evidence="1">
    <location>
        <position position="115"/>
    </location>
</feature>
<feature type="binding site" evidence="1">
    <location>
        <position position="54"/>
    </location>
    <ligand>
        <name>Mn(2+)</name>
        <dbReference type="ChEBI" id="CHEBI:29035"/>
        <label>1</label>
    </ligand>
</feature>
<feature type="binding site" evidence="1">
    <location>
        <position position="56"/>
    </location>
    <ligand>
        <name>Mn(2+)</name>
        <dbReference type="ChEBI" id="CHEBI:29035"/>
        <label>1</label>
    </ligand>
</feature>
<feature type="binding site" evidence="1">
    <location>
        <position position="82"/>
    </location>
    <ligand>
        <name>Mn(2+)</name>
        <dbReference type="ChEBI" id="CHEBI:29035"/>
        <label>1</label>
    </ligand>
</feature>
<feature type="binding site" evidence="1">
    <location>
        <position position="82"/>
    </location>
    <ligand>
        <name>Mn(2+)</name>
        <dbReference type="ChEBI" id="CHEBI:29035"/>
        <label>2</label>
    </ligand>
</feature>
<feature type="binding site" evidence="1">
    <location>
        <position position="114"/>
    </location>
    <ligand>
        <name>Mn(2+)</name>
        <dbReference type="ChEBI" id="CHEBI:29035"/>
        <label>2</label>
    </ligand>
</feature>
<feature type="binding site" evidence="1">
    <location>
        <position position="164"/>
    </location>
    <ligand>
        <name>Mn(2+)</name>
        <dbReference type="ChEBI" id="CHEBI:29035"/>
        <label>2</label>
    </ligand>
</feature>
<feature type="binding site" evidence="1">
    <location>
        <position position="238"/>
    </location>
    <ligand>
        <name>Mn(2+)</name>
        <dbReference type="ChEBI" id="CHEBI:29035"/>
        <label>2</label>
    </ligand>
</feature>
<feature type="modified residue" description="N-acetylalanine" evidence="2">
    <location>
        <position position="2"/>
    </location>
</feature>
<feature type="modified residue" description="Leucine methyl ester" evidence="2">
    <location>
        <position position="307"/>
    </location>
</feature>
<reference key="1">
    <citation type="journal article" date="2004" name="Genome Res.">
        <title>The status, quality, and expansion of the NIH full-length cDNA project: the Mammalian Gene Collection (MGC).</title>
        <authorList>
            <consortium name="The MGC Project Team"/>
        </authorList>
    </citation>
    <scope>NUCLEOTIDE SEQUENCE [LARGE SCALE MRNA]</scope>
    <source>
        <strain>Brown Norway</strain>
        <tissue>Testis</tissue>
    </source>
</reference>
<organism>
    <name type="scientific">Rattus norvegicus</name>
    <name type="common">Rat</name>
    <dbReference type="NCBI Taxonomy" id="10116"/>
    <lineage>
        <taxon>Eukaryota</taxon>
        <taxon>Metazoa</taxon>
        <taxon>Chordata</taxon>
        <taxon>Craniata</taxon>
        <taxon>Vertebrata</taxon>
        <taxon>Euteleostomi</taxon>
        <taxon>Mammalia</taxon>
        <taxon>Eutheria</taxon>
        <taxon>Euarchontoglires</taxon>
        <taxon>Glires</taxon>
        <taxon>Rodentia</taxon>
        <taxon>Myomorpha</taxon>
        <taxon>Muroidea</taxon>
        <taxon>Muridae</taxon>
        <taxon>Murinae</taxon>
        <taxon>Rattus</taxon>
    </lineage>
</organism>